<proteinExistence type="inferred from homology"/>
<accession>Q055M9</accession>
<feature type="chain" id="PRO_1000069776" description="7-cyano-7-deazaguanine synthase">
    <location>
        <begin position="1"/>
        <end position="242"/>
    </location>
</feature>
<feature type="region of interest" description="Disordered" evidence="2">
    <location>
        <begin position="1"/>
        <end position="25"/>
    </location>
</feature>
<feature type="binding site" evidence="1">
    <location>
        <begin position="32"/>
        <end position="42"/>
    </location>
    <ligand>
        <name>ATP</name>
        <dbReference type="ChEBI" id="CHEBI:30616"/>
    </ligand>
</feature>
<feature type="binding site" evidence="1">
    <location>
        <position position="212"/>
    </location>
    <ligand>
        <name>Zn(2+)</name>
        <dbReference type="ChEBI" id="CHEBI:29105"/>
    </ligand>
</feature>
<feature type="binding site" evidence="1">
    <location>
        <position position="221"/>
    </location>
    <ligand>
        <name>Zn(2+)</name>
        <dbReference type="ChEBI" id="CHEBI:29105"/>
    </ligand>
</feature>
<feature type="binding site" evidence="1">
    <location>
        <position position="224"/>
    </location>
    <ligand>
        <name>Zn(2+)</name>
        <dbReference type="ChEBI" id="CHEBI:29105"/>
    </ligand>
</feature>
<feature type="binding site" evidence="1">
    <location>
        <position position="227"/>
    </location>
    <ligand>
        <name>Zn(2+)</name>
        <dbReference type="ChEBI" id="CHEBI:29105"/>
    </ligand>
</feature>
<reference key="1">
    <citation type="journal article" date="2006" name="Proc. Natl. Acad. Sci. U.S.A.">
        <title>Genome reduction in Leptospira borgpetersenii reflects limited transmission potential.</title>
        <authorList>
            <person name="Bulach D.M."/>
            <person name="Zuerner R.L."/>
            <person name="Wilson P."/>
            <person name="Seemann T."/>
            <person name="McGrath A."/>
            <person name="Cullen P.A."/>
            <person name="Davis J."/>
            <person name="Johnson M."/>
            <person name="Kuczek E."/>
            <person name="Alt D.P."/>
            <person name="Peterson-Burch B."/>
            <person name="Coppel R.L."/>
            <person name="Rood J.I."/>
            <person name="Davies J.K."/>
            <person name="Adler B."/>
        </authorList>
    </citation>
    <scope>NUCLEOTIDE SEQUENCE [LARGE SCALE GENOMIC DNA]</scope>
    <source>
        <strain>L550</strain>
    </source>
</reference>
<organism>
    <name type="scientific">Leptospira borgpetersenii serovar Hardjo-bovis (strain L550)</name>
    <dbReference type="NCBI Taxonomy" id="355276"/>
    <lineage>
        <taxon>Bacteria</taxon>
        <taxon>Pseudomonadati</taxon>
        <taxon>Spirochaetota</taxon>
        <taxon>Spirochaetia</taxon>
        <taxon>Leptospirales</taxon>
        <taxon>Leptospiraceae</taxon>
        <taxon>Leptospira</taxon>
    </lineage>
</organism>
<keyword id="KW-0067">ATP-binding</keyword>
<keyword id="KW-0436">Ligase</keyword>
<keyword id="KW-0479">Metal-binding</keyword>
<keyword id="KW-0547">Nucleotide-binding</keyword>
<keyword id="KW-0671">Queuosine biosynthesis</keyword>
<keyword id="KW-0862">Zinc</keyword>
<dbReference type="EC" id="6.3.4.20" evidence="1"/>
<dbReference type="EMBL" id="CP000348">
    <property type="protein sequence ID" value="ABJ77966.1"/>
    <property type="molecule type" value="Genomic_DNA"/>
</dbReference>
<dbReference type="RefSeq" id="WP_002740442.1">
    <property type="nucleotide sequence ID" value="NC_008508.1"/>
</dbReference>
<dbReference type="SMR" id="Q055M9"/>
<dbReference type="KEGG" id="lbl:LBL_0358"/>
<dbReference type="HOGENOM" id="CLU_081854_1_0_12"/>
<dbReference type="UniPathway" id="UPA00391"/>
<dbReference type="GO" id="GO:0005524">
    <property type="term" value="F:ATP binding"/>
    <property type="evidence" value="ECO:0007669"/>
    <property type="project" value="UniProtKB-UniRule"/>
</dbReference>
<dbReference type="GO" id="GO:0016879">
    <property type="term" value="F:ligase activity, forming carbon-nitrogen bonds"/>
    <property type="evidence" value="ECO:0007669"/>
    <property type="project" value="UniProtKB-UniRule"/>
</dbReference>
<dbReference type="GO" id="GO:0008270">
    <property type="term" value="F:zinc ion binding"/>
    <property type="evidence" value="ECO:0007669"/>
    <property type="project" value="UniProtKB-UniRule"/>
</dbReference>
<dbReference type="GO" id="GO:0008616">
    <property type="term" value="P:queuosine biosynthetic process"/>
    <property type="evidence" value="ECO:0007669"/>
    <property type="project" value="UniProtKB-UniRule"/>
</dbReference>
<dbReference type="CDD" id="cd01995">
    <property type="entry name" value="QueC-like"/>
    <property type="match status" value="1"/>
</dbReference>
<dbReference type="FunFam" id="3.40.50.620:FF:000170">
    <property type="entry name" value="7-cyano-7-deazaguanine synthase"/>
    <property type="match status" value="1"/>
</dbReference>
<dbReference type="Gene3D" id="3.40.50.620">
    <property type="entry name" value="HUPs"/>
    <property type="match status" value="1"/>
</dbReference>
<dbReference type="HAMAP" id="MF_01633">
    <property type="entry name" value="QueC"/>
    <property type="match status" value="1"/>
</dbReference>
<dbReference type="InterPro" id="IPR018317">
    <property type="entry name" value="QueC"/>
</dbReference>
<dbReference type="InterPro" id="IPR014729">
    <property type="entry name" value="Rossmann-like_a/b/a_fold"/>
</dbReference>
<dbReference type="NCBIfam" id="TIGR00364">
    <property type="entry name" value="7-cyano-7-deazaguanine synthase QueC"/>
    <property type="match status" value="1"/>
</dbReference>
<dbReference type="PANTHER" id="PTHR42914">
    <property type="entry name" value="7-CYANO-7-DEAZAGUANINE SYNTHASE"/>
    <property type="match status" value="1"/>
</dbReference>
<dbReference type="PANTHER" id="PTHR42914:SF1">
    <property type="entry name" value="7-CYANO-7-DEAZAGUANINE SYNTHASE"/>
    <property type="match status" value="1"/>
</dbReference>
<dbReference type="Pfam" id="PF06508">
    <property type="entry name" value="QueC"/>
    <property type="match status" value="1"/>
</dbReference>
<dbReference type="PIRSF" id="PIRSF006293">
    <property type="entry name" value="ExsB"/>
    <property type="match status" value="1"/>
</dbReference>
<dbReference type="SUPFAM" id="SSF52402">
    <property type="entry name" value="Adenine nucleotide alpha hydrolases-like"/>
    <property type="match status" value="1"/>
</dbReference>
<evidence type="ECO:0000255" key="1">
    <source>
        <dbReference type="HAMAP-Rule" id="MF_01633"/>
    </source>
</evidence>
<evidence type="ECO:0000256" key="2">
    <source>
        <dbReference type="SAM" id="MobiDB-lite"/>
    </source>
</evidence>
<sequence length="242" mass="26774">MNSRKDKNSKGKNSDTKRKKSSQENDKAVVLLSGGLDSTTCLYQALADGKKIQALSFDYGQKHKIELSYAKKITRQLGISHTIQKLKPELFLGSSLTQKSLRVPKNSLGKEEIPNTYVPGRNILFLSFAVCLAEGTGSNSIYIGVNAMDYSGYPDCRPEFIKTYETAIQLGTKKGNQGSPIKIVTPLQNLSKKEIVLLGNRLQVPFHLTFSCYDPKNRKACGKCDACLLRKKGFQETGVSEK</sequence>
<gene>
    <name evidence="1" type="primary">queC</name>
    <name type="ordered locus">LBL_0358</name>
</gene>
<protein>
    <recommendedName>
        <fullName evidence="1">7-cyano-7-deazaguanine synthase</fullName>
        <ecNumber evidence="1">6.3.4.20</ecNumber>
    </recommendedName>
    <alternativeName>
        <fullName evidence="1">7-cyano-7-carbaguanine synthase</fullName>
    </alternativeName>
    <alternativeName>
        <fullName evidence="1">PreQ(0) synthase</fullName>
    </alternativeName>
    <alternativeName>
        <fullName evidence="1">Queuosine biosynthesis protein QueC</fullName>
    </alternativeName>
</protein>
<name>QUEC_LEPBL</name>
<comment type="function">
    <text evidence="1">Catalyzes the ATP-dependent conversion of 7-carboxy-7-deazaguanine (CDG) to 7-cyano-7-deazaguanine (preQ(0)).</text>
</comment>
<comment type="catalytic activity">
    <reaction evidence="1">
        <text>7-carboxy-7-deazaguanine + NH4(+) + ATP = 7-cyano-7-deazaguanine + ADP + phosphate + H2O + H(+)</text>
        <dbReference type="Rhea" id="RHEA:27982"/>
        <dbReference type="ChEBI" id="CHEBI:15377"/>
        <dbReference type="ChEBI" id="CHEBI:15378"/>
        <dbReference type="ChEBI" id="CHEBI:28938"/>
        <dbReference type="ChEBI" id="CHEBI:30616"/>
        <dbReference type="ChEBI" id="CHEBI:43474"/>
        <dbReference type="ChEBI" id="CHEBI:45075"/>
        <dbReference type="ChEBI" id="CHEBI:61036"/>
        <dbReference type="ChEBI" id="CHEBI:456216"/>
        <dbReference type="EC" id="6.3.4.20"/>
    </reaction>
</comment>
<comment type="cofactor">
    <cofactor evidence="1">
        <name>Zn(2+)</name>
        <dbReference type="ChEBI" id="CHEBI:29105"/>
    </cofactor>
    <text evidence="1">Binds 1 zinc ion per subunit.</text>
</comment>
<comment type="pathway">
    <text evidence="1">Purine metabolism; 7-cyano-7-deazaguanine biosynthesis.</text>
</comment>
<comment type="similarity">
    <text evidence="1">Belongs to the QueC family.</text>
</comment>